<accession>Q6H5U3</accession>
<accession>A0A0P0VMI9</accession>
<reference key="1">
    <citation type="journal article" date="2005" name="Nature">
        <title>The map-based sequence of the rice genome.</title>
        <authorList>
            <consortium name="International rice genome sequencing project (IRGSP)"/>
        </authorList>
    </citation>
    <scope>NUCLEOTIDE SEQUENCE [LARGE SCALE GENOMIC DNA]</scope>
    <source>
        <strain>cv. Nipponbare</strain>
    </source>
</reference>
<reference key="2">
    <citation type="journal article" date="2008" name="Nucleic Acids Res.">
        <title>The rice annotation project database (RAP-DB): 2008 update.</title>
        <authorList>
            <consortium name="The rice annotation project (RAP)"/>
        </authorList>
    </citation>
    <scope>GENOME REANNOTATION</scope>
    <source>
        <strain>cv. Nipponbare</strain>
    </source>
</reference>
<reference key="3">
    <citation type="journal article" date="2013" name="Rice">
        <title>Improvement of the Oryza sativa Nipponbare reference genome using next generation sequence and optical map data.</title>
        <authorList>
            <person name="Kawahara Y."/>
            <person name="de la Bastide M."/>
            <person name="Hamilton J.P."/>
            <person name="Kanamori H."/>
            <person name="McCombie W.R."/>
            <person name="Ouyang S."/>
            <person name="Schwartz D.C."/>
            <person name="Tanaka T."/>
            <person name="Wu J."/>
            <person name="Zhou S."/>
            <person name="Childs K.L."/>
            <person name="Davidson R.M."/>
            <person name="Lin H."/>
            <person name="Quesada-Ocampo L."/>
            <person name="Vaillancourt B."/>
            <person name="Sakai H."/>
            <person name="Lee S.S."/>
            <person name="Kim J."/>
            <person name="Numa H."/>
            <person name="Itoh T."/>
            <person name="Buell C.R."/>
            <person name="Matsumoto T."/>
        </authorList>
    </citation>
    <scope>GENOME REANNOTATION</scope>
    <source>
        <strain>cv. Nipponbare</strain>
    </source>
</reference>
<reference key="4">
    <citation type="journal article" date="2005" name="PLoS Biol.">
        <title>The genomes of Oryza sativa: a history of duplications.</title>
        <authorList>
            <person name="Yu J."/>
            <person name="Wang J."/>
            <person name="Lin W."/>
            <person name="Li S."/>
            <person name="Li H."/>
            <person name="Zhou J."/>
            <person name="Ni P."/>
            <person name="Dong W."/>
            <person name="Hu S."/>
            <person name="Zeng C."/>
            <person name="Zhang J."/>
            <person name="Zhang Y."/>
            <person name="Li R."/>
            <person name="Xu Z."/>
            <person name="Li S."/>
            <person name="Li X."/>
            <person name="Zheng H."/>
            <person name="Cong L."/>
            <person name="Lin L."/>
            <person name="Yin J."/>
            <person name="Geng J."/>
            <person name="Li G."/>
            <person name="Shi J."/>
            <person name="Liu J."/>
            <person name="Lv H."/>
            <person name="Li J."/>
            <person name="Wang J."/>
            <person name="Deng Y."/>
            <person name="Ran L."/>
            <person name="Shi X."/>
            <person name="Wang X."/>
            <person name="Wu Q."/>
            <person name="Li C."/>
            <person name="Ren X."/>
            <person name="Wang J."/>
            <person name="Wang X."/>
            <person name="Li D."/>
            <person name="Liu D."/>
            <person name="Zhang X."/>
            <person name="Ji Z."/>
            <person name="Zhao W."/>
            <person name="Sun Y."/>
            <person name="Zhang Z."/>
            <person name="Bao J."/>
            <person name="Han Y."/>
            <person name="Dong L."/>
            <person name="Ji J."/>
            <person name="Chen P."/>
            <person name="Wu S."/>
            <person name="Liu J."/>
            <person name="Xiao Y."/>
            <person name="Bu D."/>
            <person name="Tan J."/>
            <person name="Yang L."/>
            <person name="Ye C."/>
            <person name="Zhang J."/>
            <person name="Xu J."/>
            <person name="Zhou Y."/>
            <person name="Yu Y."/>
            <person name="Zhang B."/>
            <person name="Zhuang S."/>
            <person name="Wei H."/>
            <person name="Liu B."/>
            <person name="Lei M."/>
            <person name="Yu H."/>
            <person name="Li Y."/>
            <person name="Xu H."/>
            <person name="Wei S."/>
            <person name="He X."/>
            <person name="Fang L."/>
            <person name="Zhang Z."/>
            <person name="Zhang Y."/>
            <person name="Huang X."/>
            <person name="Su Z."/>
            <person name="Tong W."/>
            <person name="Li J."/>
            <person name="Tong Z."/>
            <person name="Li S."/>
            <person name="Ye J."/>
            <person name="Wang L."/>
            <person name="Fang L."/>
            <person name="Lei T."/>
            <person name="Chen C.-S."/>
            <person name="Chen H.-C."/>
            <person name="Xu Z."/>
            <person name="Li H."/>
            <person name="Huang H."/>
            <person name="Zhang F."/>
            <person name="Xu H."/>
            <person name="Li N."/>
            <person name="Zhao C."/>
            <person name="Li S."/>
            <person name="Dong L."/>
            <person name="Huang Y."/>
            <person name="Li L."/>
            <person name="Xi Y."/>
            <person name="Qi Q."/>
            <person name="Li W."/>
            <person name="Zhang B."/>
            <person name="Hu W."/>
            <person name="Zhang Y."/>
            <person name="Tian X."/>
            <person name="Jiao Y."/>
            <person name="Liang X."/>
            <person name="Jin J."/>
            <person name="Gao L."/>
            <person name="Zheng W."/>
            <person name="Hao B."/>
            <person name="Liu S.-M."/>
            <person name="Wang W."/>
            <person name="Yuan L."/>
            <person name="Cao M."/>
            <person name="McDermott J."/>
            <person name="Samudrala R."/>
            <person name="Wang J."/>
            <person name="Wong G.K.-S."/>
            <person name="Yang H."/>
        </authorList>
    </citation>
    <scope>NUCLEOTIDE SEQUENCE [LARGE SCALE GENOMIC DNA]</scope>
    <source>
        <strain>cv. Nipponbare</strain>
    </source>
</reference>
<reference key="5">
    <citation type="journal article" date="2003" name="Science">
        <title>Collection, mapping, and annotation of over 28,000 cDNA clones from japonica rice.</title>
        <authorList>
            <consortium name="The rice full-length cDNA consortium"/>
        </authorList>
    </citation>
    <scope>NUCLEOTIDE SEQUENCE [LARGE SCALE MRNA]</scope>
    <source>
        <strain>cv. Nipponbare</strain>
    </source>
</reference>
<keyword id="KW-0256">Endoplasmic reticulum</keyword>
<keyword id="KW-0275">Fatty acid biosynthesis</keyword>
<keyword id="KW-0276">Fatty acid metabolism</keyword>
<keyword id="KW-0444">Lipid biosynthesis</keyword>
<keyword id="KW-0443">Lipid metabolism</keyword>
<keyword id="KW-0472">Membrane</keyword>
<keyword id="KW-0560">Oxidoreductase</keyword>
<keyword id="KW-1185">Reference proteome</keyword>
<keyword id="KW-0812">Transmembrane</keyword>
<keyword id="KW-1133">Transmembrane helix</keyword>
<proteinExistence type="evidence at transcript level"/>
<gene>
    <name type="ordered locus">Os02g0639600</name>
    <name type="ordered locus">LOC_Os02g42660</name>
    <name type="ORF">OsJ_07673</name>
    <name type="ORF">OSJNBa0014E22.44</name>
    <name type="ORF">P0010C01.20</name>
</gene>
<comment type="function">
    <text evidence="1">Sphingolipid-delta-4-desaturase required for the biosynthesis of delta-4-unsaturated sphingolipids and derivatives.</text>
</comment>
<comment type="catalytic activity">
    <reaction evidence="2">
        <text>an N-acylsphinganine + 2 Fe(II)-[cytochrome b5] + O2 + 2 H(+) = an N-acylsphing-4-enine + 2 Fe(III)-[cytochrome b5] + 2 H2O</text>
        <dbReference type="Rhea" id="RHEA:46544"/>
        <dbReference type="Rhea" id="RHEA-COMP:10438"/>
        <dbReference type="Rhea" id="RHEA-COMP:10439"/>
        <dbReference type="ChEBI" id="CHEBI:15377"/>
        <dbReference type="ChEBI" id="CHEBI:15378"/>
        <dbReference type="ChEBI" id="CHEBI:15379"/>
        <dbReference type="ChEBI" id="CHEBI:29033"/>
        <dbReference type="ChEBI" id="CHEBI:29034"/>
        <dbReference type="ChEBI" id="CHEBI:31488"/>
        <dbReference type="ChEBI" id="CHEBI:52639"/>
        <dbReference type="EC" id="1.14.19.17"/>
    </reaction>
</comment>
<comment type="subcellular location">
    <subcellularLocation>
        <location evidence="4">Endoplasmic reticulum membrane</location>
        <topology evidence="4">Multi-pass membrane protein</topology>
    </subcellularLocation>
</comment>
<comment type="similarity">
    <text evidence="4">Belongs to the fatty acid desaturase type 1 family. DEGS subfamily.</text>
</comment>
<sequence length="328" mass="37869">MGAAAGDGREEEGVMATDFFWSYTDEPHATRRREILAKHPQIKELFGPDPLAFLKIAAVVSLQLWTATLLRDASWVKILTVAYFFGSFLNHNLFLAIHELSHNLAFTTPSYNRWLGIFANLPIGVPMSITFQKYHLEHHRFQGVDGIDMDIPSQAEAHAVKNTLSKSVWVVFQLFFYALRPLFLKPKPPGLWEFTNLIIQIALDASMVYFFGWKSLAYLILSTFVGGGMHPMAGHFISEHYVFNPDQETYSYYGPLNLMTWHVGYHNEHHDFPRIPGTRLYKVREIAPEYYNNLKSYKSWSQVIYMYIMDQTVGPFSRMKRKAPKKDS</sequence>
<dbReference type="EC" id="1.14.19.17" evidence="2"/>
<dbReference type="EMBL" id="AP004768">
    <property type="protein sequence ID" value="BAD25351.1"/>
    <property type="molecule type" value="Genomic_DNA"/>
</dbReference>
<dbReference type="EMBL" id="AP005513">
    <property type="protein sequence ID" value="BAD25906.1"/>
    <property type="molecule type" value="Genomic_DNA"/>
</dbReference>
<dbReference type="EMBL" id="AP008208">
    <property type="protein sequence ID" value="BAF09454.1"/>
    <property type="molecule type" value="Genomic_DNA"/>
</dbReference>
<dbReference type="EMBL" id="AP014958">
    <property type="protein sequence ID" value="BAS79967.1"/>
    <property type="molecule type" value="Genomic_DNA"/>
</dbReference>
<dbReference type="EMBL" id="CM000139">
    <property type="protein sequence ID" value="EEE57453.1"/>
    <property type="molecule type" value="Genomic_DNA"/>
</dbReference>
<dbReference type="EMBL" id="AK101968">
    <property type="protein sequence ID" value="BAG95317.1"/>
    <property type="molecule type" value="mRNA"/>
</dbReference>
<dbReference type="RefSeq" id="XP_015623789.1">
    <property type="nucleotide sequence ID" value="XM_015768303.1"/>
</dbReference>
<dbReference type="FunCoup" id="Q6H5U3">
    <property type="interactions" value="1305"/>
</dbReference>
<dbReference type="STRING" id="39947.Q6H5U3"/>
<dbReference type="PaxDb" id="39947-Q6H5U3"/>
<dbReference type="EnsemblPlants" id="Os02t0639600-01">
    <property type="protein sequence ID" value="Os02t0639600-01"/>
    <property type="gene ID" value="Os02g0639600"/>
</dbReference>
<dbReference type="Gramene" id="Os02t0639600-01">
    <property type="protein sequence ID" value="Os02t0639600-01"/>
    <property type="gene ID" value="Os02g0639600"/>
</dbReference>
<dbReference type="KEGG" id="dosa:Os02g0639600"/>
<dbReference type="eggNOG" id="KOG2987">
    <property type="taxonomic scope" value="Eukaryota"/>
</dbReference>
<dbReference type="HOGENOM" id="CLU_032156_0_0_1"/>
<dbReference type="InParanoid" id="Q6H5U3"/>
<dbReference type="OMA" id="GATCNQN"/>
<dbReference type="OrthoDB" id="200948at2759"/>
<dbReference type="PlantReactome" id="R-OSA-1119325">
    <property type="pathway name" value="Sphingolipid metabolism"/>
</dbReference>
<dbReference type="Proteomes" id="UP000000763">
    <property type="component" value="Chromosome 2"/>
</dbReference>
<dbReference type="Proteomes" id="UP000007752">
    <property type="component" value="Chromosome 2"/>
</dbReference>
<dbReference type="Proteomes" id="UP000059680">
    <property type="component" value="Chromosome 2"/>
</dbReference>
<dbReference type="GO" id="GO:0005789">
    <property type="term" value="C:endoplasmic reticulum membrane"/>
    <property type="evidence" value="ECO:0007669"/>
    <property type="project" value="UniProtKB-SubCell"/>
</dbReference>
<dbReference type="GO" id="GO:0042284">
    <property type="term" value="F:sphingolipid delta-4 desaturase activity"/>
    <property type="evidence" value="ECO:0000318"/>
    <property type="project" value="GO_Central"/>
</dbReference>
<dbReference type="GO" id="GO:0046513">
    <property type="term" value="P:ceramide biosynthetic process"/>
    <property type="evidence" value="ECO:0000318"/>
    <property type="project" value="GO_Central"/>
</dbReference>
<dbReference type="GO" id="GO:0006633">
    <property type="term" value="P:fatty acid biosynthetic process"/>
    <property type="evidence" value="ECO:0007669"/>
    <property type="project" value="UniProtKB-KW"/>
</dbReference>
<dbReference type="CDD" id="cd03508">
    <property type="entry name" value="Delta4-sphingolipid-FADS-like"/>
    <property type="match status" value="1"/>
</dbReference>
<dbReference type="InterPro" id="IPR011388">
    <property type="entry name" value="DES1/DES2"/>
</dbReference>
<dbReference type="InterPro" id="IPR005804">
    <property type="entry name" value="FA_desaturase_dom"/>
</dbReference>
<dbReference type="InterPro" id="IPR013866">
    <property type="entry name" value="Sphingolipid_d4-desaturase_N"/>
</dbReference>
<dbReference type="PANTHER" id="PTHR12879">
    <property type="entry name" value="SPHINGOLIPID DELTA 4 DESATURASE/C-4 HYDROXYLASE PROTEIN DES2"/>
    <property type="match status" value="1"/>
</dbReference>
<dbReference type="PANTHER" id="PTHR12879:SF8">
    <property type="entry name" value="SPHINGOLIPID DELTA(4)-DESATURASE DES1"/>
    <property type="match status" value="1"/>
</dbReference>
<dbReference type="Pfam" id="PF00487">
    <property type="entry name" value="FA_desaturase"/>
    <property type="match status" value="1"/>
</dbReference>
<dbReference type="Pfam" id="PF08557">
    <property type="entry name" value="Lipid_DES"/>
    <property type="match status" value="1"/>
</dbReference>
<dbReference type="PIRSF" id="PIRSF017228">
    <property type="entry name" value="Sphnglp_dlt4_des"/>
    <property type="match status" value="1"/>
</dbReference>
<dbReference type="SMART" id="SM01269">
    <property type="entry name" value="Lipid_DES"/>
    <property type="match status" value="1"/>
</dbReference>
<dbReference type="PROSITE" id="PS00142">
    <property type="entry name" value="ZINC_PROTEASE"/>
    <property type="match status" value="1"/>
</dbReference>
<name>DES1L_ORYSJ</name>
<feature type="chain" id="PRO_0000430304" description="Sphingolipid delta(4)-desaturase DES1-like">
    <location>
        <begin position="1"/>
        <end position="328"/>
    </location>
</feature>
<feature type="transmembrane region" description="Helical; Name=1" evidence="3">
    <location>
        <begin position="50"/>
        <end position="70"/>
    </location>
</feature>
<feature type="transmembrane region" description="Helical; Name=2" evidence="3">
    <location>
        <begin position="78"/>
        <end position="98"/>
    </location>
</feature>
<feature type="transmembrane region" description="Helical; Name=3" evidence="3">
    <location>
        <begin position="114"/>
        <end position="134"/>
    </location>
</feature>
<feature type="transmembrane region" description="Helical; Name=4" evidence="3">
    <location>
        <begin position="164"/>
        <end position="184"/>
    </location>
</feature>
<feature type="transmembrane region" description="Helical; Name=5" evidence="3">
    <location>
        <begin position="192"/>
        <end position="212"/>
    </location>
</feature>
<feature type="transmembrane region" description="Helical; Name=6" evidence="3">
    <location>
        <begin position="217"/>
        <end position="237"/>
    </location>
</feature>
<feature type="short sequence motif" description="Histidine box-1" evidence="4">
    <location>
        <begin position="98"/>
        <end position="102"/>
    </location>
</feature>
<feature type="short sequence motif" description="Histidine box-2" evidence="4">
    <location>
        <begin position="135"/>
        <end position="139"/>
    </location>
</feature>
<feature type="short sequence motif" description="Histidine box-3" evidence="4">
    <location>
        <begin position="266"/>
        <end position="270"/>
    </location>
</feature>
<protein>
    <recommendedName>
        <fullName>Sphingolipid delta(4)-desaturase DES1-like</fullName>
        <ecNumber evidence="2">1.14.19.17</ecNumber>
    </recommendedName>
</protein>
<organism>
    <name type="scientific">Oryza sativa subsp. japonica</name>
    <name type="common">Rice</name>
    <dbReference type="NCBI Taxonomy" id="39947"/>
    <lineage>
        <taxon>Eukaryota</taxon>
        <taxon>Viridiplantae</taxon>
        <taxon>Streptophyta</taxon>
        <taxon>Embryophyta</taxon>
        <taxon>Tracheophyta</taxon>
        <taxon>Spermatophyta</taxon>
        <taxon>Magnoliopsida</taxon>
        <taxon>Liliopsida</taxon>
        <taxon>Poales</taxon>
        <taxon>Poaceae</taxon>
        <taxon>BOP clade</taxon>
        <taxon>Oryzoideae</taxon>
        <taxon>Oryzeae</taxon>
        <taxon>Oryzinae</taxon>
        <taxon>Oryza</taxon>
        <taxon>Oryza sativa</taxon>
    </lineage>
</organism>
<evidence type="ECO:0000250" key="1"/>
<evidence type="ECO:0000250" key="2">
    <source>
        <dbReference type="UniProtKB" id="Q9ZPH4"/>
    </source>
</evidence>
<evidence type="ECO:0000255" key="3"/>
<evidence type="ECO:0000305" key="4"/>